<protein>
    <recommendedName>
        <fullName evidence="1">Glycerol kinase</fullName>
        <ecNumber evidence="1">2.7.1.30</ecNumber>
    </recommendedName>
    <alternativeName>
        <fullName evidence="1">ATP:glycerol 3-phosphotransferase</fullName>
    </alternativeName>
    <alternativeName>
        <fullName evidence="1">Glycerokinase</fullName>
        <shortName evidence="1">GK</shortName>
    </alternativeName>
</protein>
<sequence>MNHILAIDQGTTSSRAMVFDEALTLKSVAQEEFPQIYPRPGWVEHDPSDLWSSVAATARAAVERAEIDGSLAAIGITNQRETVVVWERASGHPIHNAIVWQDRRTADLCHALAEAGHEPLITGRTGLLLDPYFSATKLKWLLDHVEGARARARRGELLFGTVDSYLIWKLTGGRAHVTDATNAARTMLFDIGRGIWDPEICGLLDIPMEMLPEVKDCAAPFGMTRADLFGREIPILGVAGDQQAATCGQACFRPGMMKSTYGTGCFALLNTGEERVTSRARLLTTIAYQLGGKRTYALEGSIFIAGAVVQWLRDGLKIIREAGETQGLALSSDAAQDLVIVPAFTGLGAPWWKPESRGAVFGLTRNSGPAEFARAALESVGYQTRDLLEAMRADWAAGAEGVLRVDGGMAASDWSMQFLADIIGAPVDRPVVRETTALGVAWLAGMQAGLCPGPEEFAADWALERRFEPQMEASVREAKYDRWGRAVRAVMAV</sequence>
<gene>
    <name evidence="1" type="primary">glpK</name>
    <name type="ordered locus">Rsph17029_1320</name>
</gene>
<keyword id="KW-0067">ATP-binding</keyword>
<keyword id="KW-0319">Glycerol metabolism</keyword>
<keyword id="KW-0418">Kinase</keyword>
<keyword id="KW-0547">Nucleotide-binding</keyword>
<keyword id="KW-0808">Transferase</keyword>
<comment type="function">
    <text evidence="1">Key enzyme in the regulation of glycerol uptake and metabolism. Catalyzes the phosphorylation of glycerol to yield sn-glycerol 3-phosphate.</text>
</comment>
<comment type="catalytic activity">
    <reaction evidence="1">
        <text>glycerol + ATP = sn-glycerol 3-phosphate + ADP + H(+)</text>
        <dbReference type="Rhea" id="RHEA:21644"/>
        <dbReference type="ChEBI" id="CHEBI:15378"/>
        <dbReference type="ChEBI" id="CHEBI:17754"/>
        <dbReference type="ChEBI" id="CHEBI:30616"/>
        <dbReference type="ChEBI" id="CHEBI:57597"/>
        <dbReference type="ChEBI" id="CHEBI:456216"/>
        <dbReference type="EC" id="2.7.1.30"/>
    </reaction>
</comment>
<comment type="activity regulation">
    <text evidence="1">Inhibited by fructose 1,6-bisphosphate (FBP).</text>
</comment>
<comment type="pathway">
    <text evidence="1">Polyol metabolism; glycerol degradation via glycerol kinase pathway; sn-glycerol 3-phosphate from glycerol: step 1/1.</text>
</comment>
<comment type="similarity">
    <text evidence="1">Belongs to the FGGY kinase family.</text>
</comment>
<reference key="1">
    <citation type="submission" date="2007-02" db="EMBL/GenBank/DDBJ databases">
        <title>Complete sequence of chromosome 1 of Rhodobacter sphaeroides ATCC 17029.</title>
        <authorList>
            <person name="Copeland A."/>
            <person name="Lucas S."/>
            <person name="Lapidus A."/>
            <person name="Barry K."/>
            <person name="Detter J.C."/>
            <person name="Glavina del Rio T."/>
            <person name="Hammon N."/>
            <person name="Israni S."/>
            <person name="Dalin E."/>
            <person name="Tice H."/>
            <person name="Pitluck S."/>
            <person name="Kiss H."/>
            <person name="Brettin T."/>
            <person name="Bruce D."/>
            <person name="Han C."/>
            <person name="Tapia R."/>
            <person name="Gilna P."/>
            <person name="Schmutz J."/>
            <person name="Larimer F."/>
            <person name="Land M."/>
            <person name="Hauser L."/>
            <person name="Kyrpides N."/>
            <person name="Mikhailova N."/>
            <person name="Richardson P."/>
            <person name="Mackenzie C."/>
            <person name="Choudhary M."/>
            <person name="Donohue T.J."/>
            <person name="Kaplan S."/>
        </authorList>
    </citation>
    <scope>NUCLEOTIDE SEQUENCE [LARGE SCALE GENOMIC DNA]</scope>
    <source>
        <strain>ATCC 17029 / ATH 2.4.9</strain>
    </source>
</reference>
<accession>A3PJB4</accession>
<evidence type="ECO:0000255" key="1">
    <source>
        <dbReference type="HAMAP-Rule" id="MF_00186"/>
    </source>
</evidence>
<proteinExistence type="inferred from homology"/>
<organism>
    <name type="scientific">Cereibacter sphaeroides (strain ATCC 17029 / ATH 2.4.9)</name>
    <name type="common">Rhodobacter sphaeroides</name>
    <dbReference type="NCBI Taxonomy" id="349101"/>
    <lineage>
        <taxon>Bacteria</taxon>
        <taxon>Pseudomonadati</taxon>
        <taxon>Pseudomonadota</taxon>
        <taxon>Alphaproteobacteria</taxon>
        <taxon>Rhodobacterales</taxon>
        <taxon>Paracoccaceae</taxon>
        <taxon>Cereibacter</taxon>
    </lineage>
</organism>
<dbReference type="EC" id="2.7.1.30" evidence="1"/>
<dbReference type="EMBL" id="CP000577">
    <property type="protein sequence ID" value="ABN76430.1"/>
    <property type="molecule type" value="Genomic_DNA"/>
</dbReference>
<dbReference type="RefSeq" id="WP_011840942.1">
    <property type="nucleotide sequence ID" value="NC_009049.1"/>
</dbReference>
<dbReference type="SMR" id="A3PJB4"/>
<dbReference type="KEGG" id="rsh:Rsph17029_1320"/>
<dbReference type="HOGENOM" id="CLU_009281_2_3_5"/>
<dbReference type="UniPathway" id="UPA00618">
    <property type="reaction ID" value="UER00672"/>
</dbReference>
<dbReference type="GO" id="GO:0005829">
    <property type="term" value="C:cytosol"/>
    <property type="evidence" value="ECO:0007669"/>
    <property type="project" value="TreeGrafter"/>
</dbReference>
<dbReference type="GO" id="GO:0005524">
    <property type="term" value="F:ATP binding"/>
    <property type="evidence" value="ECO:0007669"/>
    <property type="project" value="UniProtKB-UniRule"/>
</dbReference>
<dbReference type="GO" id="GO:0004370">
    <property type="term" value="F:glycerol kinase activity"/>
    <property type="evidence" value="ECO:0000250"/>
    <property type="project" value="UniProtKB"/>
</dbReference>
<dbReference type="GO" id="GO:0019563">
    <property type="term" value="P:glycerol catabolic process"/>
    <property type="evidence" value="ECO:0007669"/>
    <property type="project" value="UniProtKB-UniRule"/>
</dbReference>
<dbReference type="GO" id="GO:0006071">
    <property type="term" value="P:glycerol metabolic process"/>
    <property type="evidence" value="ECO:0000250"/>
    <property type="project" value="UniProtKB"/>
</dbReference>
<dbReference type="GO" id="GO:0006072">
    <property type="term" value="P:glycerol-3-phosphate metabolic process"/>
    <property type="evidence" value="ECO:0007669"/>
    <property type="project" value="InterPro"/>
</dbReference>
<dbReference type="CDD" id="cd07786">
    <property type="entry name" value="FGGY_EcGK_like"/>
    <property type="match status" value="1"/>
</dbReference>
<dbReference type="FunFam" id="3.30.420.40:FF:000007">
    <property type="entry name" value="Glycerol kinase"/>
    <property type="match status" value="1"/>
</dbReference>
<dbReference type="FunFam" id="3.30.420.40:FF:000008">
    <property type="entry name" value="Glycerol kinase"/>
    <property type="match status" value="1"/>
</dbReference>
<dbReference type="Gene3D" id="3.30.420.40">
    <property type="match status" value="2"/>
</dbReference>
<dbReference type="HAMAP" id="MF_00186">
    <property type="entry name" value="Glycerol_kin"/>
    <property type="match status" value="1"/>
</dbReference>
<dbReference type="InterPro" id="IPR043129">
    <property type="entry name" value="ATPase_NBD"/>
</dbReference>
<dbReference type="InterPro" id="IPR000577">
    <property type="entry name" value="Carb_kinase_FGGY"/>
</dbReference>
<dbReference type="InterPro" id="IPR018483">
    <property type="entry name" value="Carb_kinase_FGGY_CS"/>
</dbReference>
<dbReference type="InterPro" id="IPR018485">
    <property type="entry name" value="FGGY_C"/>
</dbReference>
<dbReference type="InterPro" id="IPR018484">
    <property type="entry name" value="FGGY_N"/>
</dbReference>
<dbReference type="InterPro" id="IPR005999">
    <property type="entry name" value="Glycerol_kin"/>
</dbReference>
<dbReference type="NCBIfam" id="TIGR01311">
    <property type="entry name" value="glycerol_kin"/>
    <property type="match status" value="1"/>
</dbReference>
<dbReference type="NCBIfam" id="NF000756">
    <property type="entry name" value="PRK00047.1"/>
    <property type="match status" value="1"/>
</dbReference>
<dbReference type="PANTHER" id="PTHR10196:SF78">
    <property type="entry name" value="GLYCEROL KINASE"/>
    <property type="match status" value="1"/>
</dbReference>
<dbReference type="PANTHER" id="PTHR10196">
    <property type="entry name" value="SUGAR KINASE"/>
    <property type="match status" value="1"/>
</dbReference>
<dbReference type="Pfam" id="PF02782">
    <property type="entry name" value="FGGY_C"/>
    <property type="match status" value="1"/>
</dbReference>
<dbReference type="Pfam" id="PF00370">
    <property type="entry name" value="FGGY_N"/>
    <property type="match status" value="1"/>
</dbReference>
<dbReference type="PIRSF" id="PIRSF000538">
    <property type="entry name" value="GlpK"/>
    <property type="match status" value="1"/>
</dbReference>
<dbReference type="SUPFAM" id="SSF53067">
    <property type="entry name" value="Actin-like ATPase domain"/>
    <property type="match status" value="2"/>
</dbReference>
<dbReference type="PROSITE" id="PS00933">
    <property type="entry name" value="FGGY_KINASES_1"/>
    <property type="match status" value="1"/>
</dbReference>
<dbReference type="PROSITE" id="PS00445">
    <property type="entry name" value="FGGY_KINASES_2"/>
    <property type="match status" value="1"/>
</dbReference>
<name>GLPK_CERS1</name>
<feature type="chain" id="PRO_1000020769" description="Glycerol kinase">
    <location>
        <begin position="1"/>
        <end position="493"/>
    </location>
</feature>
<feature type="binding site" evidence="1">
    <location>
        <position position="11"/>
    </location>
    <ligand>
        <name>ADP</name>
        <dbReference type="ChEBI" id="CHEBI:456216"/>
    </ligand>
</feature>
<feature type="binding site" evidence="1">
    <location>
        <position position="11"/>
    </location>
    <ligand>
        <name>ATP</name>
        <dbReference type="ChEBI" id="CHEBI:30616"/>
    </ligand>
</feature>
<feature type="binding site" evidence="1">
    <location>
        <position position="11"/>
    </location>
    <ligand>
        <name>sn-glycerol 3-phosphate</name>
        <dbReference type="ChEBI" id="CHEBI:57597"/>
    </ligand>
</feature>
<feature type="binding site" evidence="1">
    <location>
        <position position="12"/>
    </location>
    <ligand>
        <name>ATP</name>
        <dbReference type="ChEBI" id="CHEBI:30616"/>
    </ligand>
</feature>
<feature type="binding site" evidence="1">
    <location>
        <position position="13"/>
    </location>
    <ligand>
        <name>ATP</name>
        <dbReference type="ChEBI" id="CHEBI:30616"/>
    </ligand>
</feature>
<feature type="binding site" evidence="1">
    <location>
        <position position="15"/>
    </location>
    <ligand>
        <name>ADP</name>
        <dbReference type="ChEBI" id="CHEBI:456216"/>
    </ligand>
</feature>
<feature type="binding site" evidence="1">
    <location>
        <position position="80"/>
    </location>
    <ligand>
        <name>glycerol</name>
        <dbReference type="ChEBI" id="CHEBI:17754"/>
    </ligand>
</feature>
<feature type="binding site" evidence="1">
    <location>
        <position position="80"/>
    </location>
    <ligand>
        <name>sn-glycerol 3-phosphate</name>
        <dbReference type="ChEBI" id="CHEBI:57597"/>
    </ligand>
</feature>
<feature type="binding site" evidence="1">
    <location>
        <position position="81"/>
    </location>
    <ligand>
        <name>glycerol</name>
        <dbReference type="ChEBI" id="CHEBI:17754"/>
    </ligand>
</feature>
<feature type="binding site" evidence="1">
    <location>
        <position position="81"/>
    </location>
    <ligand>
        <name>sn-glycerol 3-phosphate</name>
        <dbReference type="ChEBI" id="CHEBI:57597"/>
    </ligand>
</feature>
<feature type="binding site" evidence="1">
    <location>
        <position position="132"/>
    </location>
    <ligand>
        <name>glycerol</name>
        <dbReference type="ChEBI" id="CHEBI:17754"/>
    </ligand>
</feature>
<feature type="binding site" evidence="1">
    <location>
        <position position="132"/>
    </location>
    <ligand>
        <name>sn-glycerol 3-phosphate</name>
        <dbReference type="ChEBI" id="CHEBI:57597"/>
    </ligand>
</feature>
<feature type="binding site" evidence="1">
    <location>
        <position position="241"/>
    </location>
    <ligand>
        <name>glycerol</name>
        <dbReference type="ChEBI" id="CHEBI:17754"/>
    </ligand>
</feature>
<feature type="binding site" evidence="1">
    <location>
        <position position="241"/>
    </location>
    <ligand>
        <name>sn-glycerol 3-phosphate</name>
        <dbReference type="ChEBI" id="CHEBI:57597"/>
    </ligand>
</feature>
<feature type="binding site" evidence="1">
    <location>
        <position position="242"/>
    </location>
    <ligand>
        <name>glycerol</name>
        <dbReference type="ChEBI" id="CHEBI:17754"/>
    </ligand>
</feature>
<feature type="binding site" evidence="1">
    <location>
        <position position="263"/>
    </location>
    <ligand>
        <name>ADP</name>
        <dbReference type="ChEBI" id="CHEBI:456216"/>
    </ligand>
</feature>
<feature type="binding site" evidence="1">
    <location>
        <position position="263"/>
    </location>
    <ligand>
        <name>ATP</name>
        <dbReference type="ChEBI" id="CHEBI:30616"/>
    </ligand>
</feature>
<feature type="binding site" evidence="1">
    <location>
        <position position="306"/>
    </location>
    <ligand>
        <name>ADP</name>
        <dbReference type="ChEBI" id="CHEBI:456216"/>
    </ligand>
</feature>
<feature type="binding site" evidence="1">
    <location>
        <position position="306"/>
    </location>
    <ligand>
        <name>ATP</name>
        <dbReference type="ChEBI" id="CHEBI:30616"/>
    </ligand>
</feature>
<feature type="binding site" evidence="1">
    <location>
        <position position="310"/>
    </location>
    <ligand>
        <name>ATP</name>
        <dbReference type="ChEBI" id="CHEBI:30616"/>
    </ligand>
</feature>
<feature type="binding site" evidence="1">
    <location>
        <position position="408"/>
    </location>
    <ligand>
        <name>ADP</name>
        <dbReference type="ChEBI" id="CHEBI:456216"/>
    </ligand>
</feature>
<feature type="binding site" evidence="1">
    <location>
        <position position="408"/>
    </location>
    <ligand>
        <name>ATP</name>
        <dbReference type="ChEBI" id="CHEBI:30616"/>
    </ligand>
</feature>